<comment type="function">
    <text evidence="1">G protein-coupled receptor activated by ligand peptides amylin (IAPP), calcitonin (CT/CALCA) and calcitonin gene-related peptide type 1 (CGRP1/CALCA). CALCR interacts with receptor-activity-modifying proteins RAMP1, 2 and 3 to form receptor complexes AMYR1, 2 and 3, respectively. IAPP, CT and CGRP1 activate CALCR and AMYRs with distinct modes of receptor activation resulting in specific phenotypes. Ligand binding causes a conformation change that triggers signaling via guanine nucleotide-binding proteins (G proteins) and modulates the activity of downstream effectors. Activates cAMP-dependent pathway.</text>
</comment>
<comment type="subunit">
    <text evidence="1">Heterodimer of CALCR and RAMP1, RAMP2 or RAMP3; the receptor complexes function as AMYR1, AMYR2 and AMYR3 receptors, respectively, and respond to amylin/IAPP, calcitonin/CT and CGRP1 ligands. Interacts with GPRASP2.</text>
</comment>
<comment type="subcellular location">
    <subcellularLocation>
        <location evidence="1">Cell membrane</location>
        <topology evidence="1">Multi-pass membrane protein</topology>
    </subcellularLocation>
</comment>
<comment type="alternative products">
    <event type="alternative splicing"/>
    <isoform>
        <id>P25117-1</id>
        <name>Long</name>
        <sequence type="displayed"/>
    </isoform>
    <isoform>
        <id>P25117-2</id>
        <name>Short</name>
        <sequence type="described" ref="VSP_001993"/>
    </isoform>
</comment>
<comment type="similarity">
    <text evidence="4">Belongs to the G-protein coupled receptor 2 family.</text>
</comment>
<feature type="signal peptide" evidence="2">
    <location>
        <begin position="1"/>
        <end position="29"/>
    </location>
</feature>
<feature type="chain" id="PRO_0000012808" description="Calcitonin receptor">
    <location>
        <begin position="30"/>
        <end position="498"/>
    </location>
</feature>
<feature type="topological domain" description="Extracellular" evidence="4">
    <location>
        <begin position="30"/>
        <end position="147"/>
    </location>
</feature>
<feature type="transmembrane region" description="Helical; Name=1" evidence="1">
    <location>
        <begin position="148"/>
        <end position="170"/>
    </location>
</feature>
<feature type="topological domain" description="Cytoplasmic" evidence="4">
    <location>
        <begin position="171"/>
        <end position="198"/>
    </location>
</feature>
<feature type="transmembrane region" description="Helical; Name=2" evidence="1">
    <location>
        <begin position="199"/>
        <end position="219"/>
    </location>
</feature>
<feature type="topological domain" description="Extracellular" evidence="4">
    <location>
        <begin position="220"/>
        <end position="236"/>
    </location>
</feature>
<feature type="transmembrane region" description="Helical; Name=3" evidence="1">
    <location>
        <begin position="237"/>
        <end position="259"/>
    </location>
</feature>
<feature type="topological domain" description="Cytoplasmic" evidence="4">
    <location>
        <begin position="260"/>
        <end position="276"/>
    </location>
</feature>
<feature type="transmembrane region" description="Helical; Name=4" evidence="1">
    <location>
        <begin position="277"/>
        <end position="297"/>
    </location>
</feature>
<feature type="topological domain" description="Extracellular" evidence="4">
    <location>
        <begin position="298"/>
        <end position="313"/>
    </location>
</feature>
<feature type="transmembrane region" description="Helical; Name=5" evidence="1">
    <location>
        <begin position="314"/>
        <end position="337"/>
    </location>
</feature>
<feature type="topological domain" description="Cytoplasmic" evidence="4">
    <location>
        <begin position="338"/>
        <end position="357"/>
    </location>
</feature>
<feature type="transmembrane region" description="Helical; Name=6" evidence="1">
    <location>
        <begin position="358"/>
        <end position="376"/>
    </location>
</feature>
<feature type="topological domain" description="Extracellular" evidence="4">
    <location>
        <begin position="377"/>
        <end position="384"/>
    </location>
</feature>
<feature type="transmembrane region" description="Helical; Name=7" evidence="1">
    <location>
        <begin position="385"/>
        <end position="411"/>
    </location>
</feature>
<feature type="topological domain" description="Cytoplasmic" evidence="4">
    <location>
        <begin position="412"/>
        <end position="498"/>
    </location>
</feature>
<feature type="glycosylation site" description="N-linked (GlcNAc...) asparagine" evidence="2">
    <location>
        <position position="74"/>
    </location>
</feature>
<feature type="glycosylation site" description="N-linked (GlcNAc...) asparagine" evidence="2">
    <location>
        <position position="126"/>
    </location>
</feature>
<feature type="glycosylation site" description="N-linked (GlcNAc...) asparagine" evidence="2">
    <location>
        <position position="131"/>
    </location>
</feature>
<feature type="disulfide bond" evidence="1">
    <location>
        <begin position="56"/>
        <end position="82"/>
    </location>
</feature>
<feature type="disulfide bond" evidence="1">
    <location>
        <begin position="73"/>
        <end position="113"/>
    </location>
</feature>
<feature type="disulfide bond" evidence="1">
    <location>
        <begin position="96"/>
        <end position="135"/>
    </location>
</feature>
<feature type="disulfide bond" evidence="1">
    <location>
        <begin position="236"/>
        <end position="306"/>
    </location>
</feature>
<feature type="splice variant" id="VSP_001993" description="In isoform Short." evidence="3">
    <location>
        <begin position="176"/>
        <end position="191"/>
    </location>
</feature>
<reference key="1">
    <citation type="journal article" date="1991" name="Science">
        <title>Expression cloning of an adenylate cyclase-coupled calcitonin receptor.</title>
        <authorList>
            <person name="Lin H.Y."/>
            <person name="Harris T.L."/>
            <person name="Flannery M.S."/>
            <person name="Aruffo A."/>
            <person name="Kaji E.H."/>
            <person name="Gorn A."/>
            <person name="Kolakowski L.F. Jr."/>
            <person name="Lodish H.F."/>
            <person name="Goldring S.R."/>
        </authorList>
    </citation>
    <scope>NUCLEOTIDE SEQUENCE [MRNA] (ISOFORM SHORT)</scope>
</reference>
<reference key="2">
    <citation type="journal article" date="1994" name="J. Biol. Chem.">
        <title>Isolation, characterization, and chromosomal localization of the porcine calcitonin receptor gene. Identification of two variants of the receptor generated by alternative splicing.</title>
        <authorList>
            <person name="Zolnierowicz S.S."/>
            <person name="Cron P."/>
            <person name="Solinas-Toldo S."/>
            <person name="Fries R."/>
            <person name="Lin H.Y."/>
            <person name="Hemmings B.A."/>
        </authorList>
    </citation>
    <scope>NUCLEOTIDE SEQUENCE [GENOMIC DNA] (ISOFORMS LONG AND SHORT)</scope>
    <source>
        <tissue>Kidney</tissue>
    </source>
</reference>
<name>CALCR_PIG</name>
<sequence length="498" mass="57155">MRFTLTRWCLTLFIFLNRPLPVLPDSADGAHTPTLEPEPFLYILGKQRMLEAQHRCYDRMQKLPPYQGEGLYCNRTWDGWSCWDDTPAGVLAEQYCPDYFPDFDAAEKVTKYCGEDGDWYRHPESNISWSNYTMCNAFTPDKLQNAYILYYLAIVGHSLSILTLLISLGIFMFLRYFNLLAPFNALLYPTRSISCQRVTLHKNMFLTYVLNSIIIIVHLVVIVPNGELVKRDPPICKVLHFFHQYMMSCNYFWMLCEGVYLHTLIVVSVFAEGQRLWWYHVLGWGFPLIPTTAHAITRAVLFNDNCWLSVDTNLLYIIHGPVMAALVVNFFFLLNILRVLVKKLKESQEAESHMYLKAVRATLILVPLLGVQFVVLPWRPSTPLLGKIYDYVVHSLIHFQGFFVAIIYCFCNHEVQGALKRQWNQYQAQRWAGRRSTRAANAAAATAAAAAALAETVEIPVYICHQEPREEPAGEEPVVEVEGVEVIAMEVLEQETSA</sequence>
<dbReference type="EMBL" id="M74420">
    <property type="protein sequence ID" value="AAA31023.1"/>
    <property type="molecule type" value="mRNA"/>
</dbReference>
<dbReference type="EMBL" id="Z31356">
    <property type="protein sequence ID" value="CAA83233.1"/>
    <property type="molecule type" value="Genomic_DNA"/>
</dbReference>
<dbReference type="EMBL" id="Z31356">
    <property type="protein sequence ID" value="CAA83232.1"/>
    <property type="molecule type" value="Genomic_DNA"/>
</dbReference>
<dbReference type="PIR" id="A39285">
    <property type="entry name" value="A39285"/>
</dbReference>
<dbReference type="PIR" id="I47130">
    <property type="entry name" value="I47130"/>
</dbReference>
<dbReference type="RefSeq" id="NP_999519.1">
    <molecule id="P25117-2"/>
    <property type="nucleotide sequence ID" value="NM_214354.2"/>
</dbReference>
<dbReference type="RefSeq" id="XP_020957901.1">
    <molecule id="P25117-2"/>
    <property type="nucleotide sequence ID" value="XM_021102242.1"/>
</dbReference>
<dbReference type="RefSeq" id="XP_020957903.1">
    <molecule id="P25117-2"/>
    <property type="nucleotide sequence ID" value="XM_021102244.1"/>
</dbReference>
<dbReference type="RefSeq" id="XP_020957904.1">
    <molecule id="P25117-2"/>
    <property type="nucleotide sequence ID" value="XM_021102245.1"/>
</dbReference>
<dbReference type="SMR" id="P25117"/>
<dbReference type="FunCoup" id="P25117">
    <property type="interactions" value="152"/>
</dbReference>
<dbReference type="STRING" id="9823.ENSSSCP00000057815"/>
<dbReference type="GlyCosmos" id="P25117">
    <property type="glycosylation" value="3 sites, No reported glycans"/>
</dbReference>
<dbReference type="GlyGen" id="P25117">
    <property type="glycosylation" value="3 sites"/>
</dbReference>
<dbReference type="PaxDb" id="9823-ENSSSCP00000016247"/>
<dbReference type="Ensembl" id="ENSSSCT00000016693.5">
    <molecule id="P25117-1"/>
    <property type="protein sequence ID" value="ENSSSCP00000016247.5"/>
    <property type="gene ID" value="ENSSSCG00000015320.5"/>
</dbReference>
<dbReference type="Ensembl" id="ENSSSCT00015097458.1">
    <molecule id="P25117-1"/>
    <property type="protein sequence ID" value="ENSSSCP00015040058.1"/>
    <property type="gene ID" value="ENSSSCG00015072473.1"/>
</dbReference>
<dbReference type="Ensembl" id="ENSSSCT00025038832.1">
    <molecule id="P25117-1"/>
    <property type="protein sequence ID" value="ENSSSCP00025016432.1"/>
    <property type="gene ID" value="ENSSSCG00025028555.1"/>
</dbReference>
<dbReference type="Ensembl" id="ENSSSCT00030051448.1">
    <molecule id="P25117-1"/>
    <property type="protein sequence ID" value="ENSSSCP00030023425.1"/>
    <property type="gene ID" value="ENSSSCG00030036962.1"/>
</dbReference>
<dbReference type="Ensembl" id="ENSSSCT00055052178.1">
    <molecule id="P25117-1"/>
    <property type="protein sequence ID" value="ENSSSCP00055041690.1"/>
    <property type="gene ID" value="ENSSSCG00055026382.1"/>
</dbReference>
<dbReference type="Ensembl" id="ENSSSCT00070026987.1">
    <molecule id="P25117-2"/>
    <property type="protein sequence ID" value="ENSSSCP00070022435.1"/>
    <property type="gene ID" value="ENSSSCG00070013791.1"/>
</dbReference>
<dbReference type="Ensembl" id="ENSSSCT00085041132">
    <molecule id="P25117-1"/>
    <property type="protein sequence ID" value="ENSSSCP00085028797"/>
    <property type="gene ID" value="ENSSSCG00085021544"/>
</dbReference>
<dbReference type="Ensembl" id="ENSSSCT00090023601">
    <molecule id="P25117-1"/>
    <property type="protein sequence ID" value="ENSSSCP00090014433"/>
    <property type="gene ID" value="ENSSSCG00090013517"/>
</dbReference>
<dbReference type="Ensembl" id="ENSSSCT00105009102">
    <molecule id="P25117-1"/>
    <property type="protein sequence ID" value="ENSSSCP00105006623"/>
    <property type="gene ID" value="ENSSSCG00105004554"/>
</dbReference>
<dbReference type="Ensembl" id="ENSSSCT00110057246">
    <molecule id="P25117-1"/>
    <property type="protein sequence ID" value="ENSSSCP00110039829"/>
    <property type="gene ID" value="ENSSSCG00110029958"/>
</dbReference>
<dbReference type="Ensembl" id="ENSSSCT00115026530">
    <molecule id="P25117-1"/>
    <property type="protein sequence ID" value="ENSSSCP00115025139"/>
    <property type="gene ID" value="ENSSSCG00115015248"/>
</dbReference>
<dbReference type="Ensembl" id="ENSSSCT00130054927">
    <molecule id="P25117-1"/>
    <property type="protein sequence ID" value="ENSSSCP00130039355"/>
    <property type="gene ID" value="ENSSSCG00130028128"/>
</dbReference>
<dbReference type="GeneID" id="397638"/>
<dbReference type="KEGG" id="ssc:397638"/>
<dbReference type="CTD" id="799"/>
<dbReference type="eggNOG" id="KOG4564">
    <property type="taxonomic scope" value="Eukaryota"/>
</dbReference>
<dbReference type="GeneTree" id="ENSGT00940000155380"/>
<dbReference type="InParanoid" id="P25117"/>
<dbReference type="OMA" id="NIPVYIC"/>
<dbReference type="OrthoDB" id="16753at2759"/>
<dbReference type="Reactome" id="R-SSC-418555">
    <property type="pathway name" value="G alpha (s) signalling events"/>
</dbReference>
<dbReference type="Reactome" id="R-SSC-419812">
    <property type="pathway name" value="Calcitonin-like ligand receptors"/>
</dbReference>
<dbReference type="Proteomes" id="UP000008227">
    <property type="component" value="Chromosome 9"/>
</dbReference>
<dbReference type="Proteomes" id="UP000314985">
    <property type="component" value="Chromosome 9"/>
</dbReference>
<dbReference type="Proteomes" id="UP000694570">
    <property type="component" value="Unplaced"/>
</dbReference>
<dbReference type="Proteomes" id="UP000694571">
    <property type="component" value="Unplaced"/>
</dbReference>
<dbReference type="Proteomes" id="UP000694720">
    <property type="component" value="Unplaced"/>
</dbReference>
<dbReference type="Proteomes" id="UP000694722">
    <property type="component" value="Unplaced"/>
</dbReference>
<dbReference type="Proteomes" id="UP000694723">
    <property type="component" value="Unplaced"/>
</dbReference>
<dbReference type="Proteomes" id="UP000694724">
    <property type="component" value="Unplaced"/>
</dbReference>
<dbReference type="Proteomes" id="UP000694725">
    <property type="component" value="Unplaced"/>
</dbReference>
<dbReference type="Proteomes" id="UP000694726">
    <property type="component" value="Unplaced"/>
</dbReference>
<dbReference type="Proteomes" id="UP000694727">
    <property type="component" value="Unplaced"/>
</dbReference>
<dbReference type="Proteomes" id="UP000694728">
    <property type="component" value="Unplaced"/>
</dbReference>
<dbReference type="GO" id="GO:0001669">
    <property type="term" value="C:acrosomal vesicle"/>
    <property type="evidence" value="ECO:0007669"/>
    <property type="project" value="Ensembl"/>
</dbReference>
<dbReference type="GO" id="GO:0150056">
    <property type="term" value="C:amylin receptor complex 1"/>
    <property type="evidence" value="ECO:0007669"/>
    <property type="project" value="Ensembl"/>
</dbReference>
<dbReference type="GO" id="GO:0150057">
    <property type="term" value="C:amylin receptor complex 2"/>
    <property type="evidence" value="ECO:0007669"/>
    <property type="project" value="Ensembl"/>
</dbReference>
<dbReference type="GO" id="GO:0150058">
    <property type="term" value="C:amylin receptor complex 3"/>
    <property type="evidence" value="ECO:0007669"/>
    <property type="project" value="Ensembl"/>
</dbReference>
<dbReference type="GO" id="GO:0005929">
    <property type="term" value="C:cilium"/>
    <property type="evidence" value="ECO:0007669"/>
    <property type="project" value="Ensembl"/>
</dbReference>
<dbReference type="GO" id="GO:0005886">
    <property type="term" value="C:plasma membrane"/>
    <property type="evidence" value="ECO:0000303"/>
    <property type="project" value="UniProtKB"/>
</dbReference>
<dbReference type="GO" id="GO:0097643">
    <property type="term" value="F:amylin receptor activity"/>
    <property type="evidence" value="ECO:0007669"/>
    <property type="project" value="Ensembl"/>
</dbReference>
<dbReference type="GO" id="GO:0001540">
    <property type="term" value="F:amyloid-beta binding"/>
    <property type="evidence" value="ECO:0007669"/>
    <property type="project" value="Ensembl"/>
</dbReference>
<dbReference type="GO" id="GO:0032841">
    <property type="term" value="F:calcitonin binding"/>
    <property type="evidence" value="ECO:0000314"/>
    <property type="project" value="UniProtKB"/>
</dbReference>
<dbReference type="GO" id="GO:0001635">
    <property type="term" value="F:calcitonin gene-related peptide receptor activity"/>
    <property type="evidence" value="ECO:0007669"/>
    <property type="project" value="Ensembl"/>
</dbReference>
<dbReference type="GO" id="GO:0004948">
    <property type="term" value="F:calcitonin receptor activity"/>
    <property type="evidence" value="ECO:0000314"/>
    <property type="project" value="UniProtKB"/>
</dbReference>
<dbReference type="GO" id="GO:0007189">
    <property type="term" value="P:adenylate cyclase-activating G protein-coupled receptor signaling pathway"/>
    <property type="evidence" value="ECO:0000314"/>
    <property type="project" value="UniProtKB"/>
</dbReference>
<dbReference type="GO" id="GO:0150059">
    <property type="term" value="P:amylin receptor 1 signaling pathway"/>
    <property type="evidence" value="ECO:0007669"/>
    <property type="project" value="Ensembl"/>
</dbReference>
<dbReference type="GO" id="GO:0150060">
    <property type="term" value="P:amylin receptor 2 signaling pathway"/>
    <property type="evidence" value="ECO:0007669"/>
    <property type="project" value="Ensembl"/>
</dbReference>
<dbReference type="GO" id="GO:0150061">
    <property type="term" value="P:amylin receptor 3 signaling pathway"/>
    <property type="evidence" value="ECO:0007669"/>
    <property type="project" value="Ensembl"/>
</dbReference>
<dbReference type="GO" id="GO:0007166">
    <property type="term" value="P:cell surface receptor signaling pathway"/>
    <property type="evidence" value="ECO:0007669"/>
    <property type="project" value="InterPro"/>
</dbReference>
<dbReference type="GO" id="GO:0030279">
    <property type="term" value="P:negative regulation of ossification"/>
    <property type="evidence" value="ECO:0007669"/>
    <property type="project" value="Ensembl"/>
</dbReference>
<dbReference type="GO" id="GO:0001503">
    <property type="term" value="P:ossification"/>
    <property type="evidence" value="ECO:0007669"/>
    <property type="project" value="Ensembl"/>
</dbReference>
<dbReference type="GO" id="GO:0030316">
    <property type="term" value="P:osteoclast differentiation"/>
    <property type="evidence" value="ECO:0007669"/>
    <property type="project" value="Ensembl"/>
</dbReference>
<dbReference type="GO" id="GO:0050850">
    <property type="term" value="P:positive regulation of calcium-mediated signaling"/>
    <property type="evidence" value="ECO:0007669"/>
    <property type="project" value="Ensembl"/>
</dbReference>
<dbReference type="GO" id="GO:0141163">
    <property type="term" value="P:positive regulation of cAMP/PKA signal transduction"/>
    <property type="evidence" value="ECO:0007669"/>
    <property type="project" value="Ensembl"/>
</dbReference>
<dbReference type="GO" id="GO:0007204">
    <property type="term" value="P:positive regulation of cytosolic calcium ion concentration"/>
    <property type="evidence" value="ECO:0007669"/>
    <property type="project" value="Ensembl"/>
</dbReference>
<dbReference type="GO" id="GO:0070374">
    <property type="term" value="P:positive regulation of ERK1 and ERK2 cascade"/>
    <property type="evidence" value="ECO:0007669"/>
    <property type="project" value="Ensembl"/>
</dbReference>
<dbReference type="GO" id="GO:0010628">
    <property type="term" value="P:positive regulation of gene expression"/>
    <property type="evidence" value="ECO:0007669"/>
    <property type="project" value="Ensembl"/>
</dbReference>
<dbReference type="GO" id="GO:0051897">
    <property type="term" value="P:positive regulation of phosphatidylinositol 3-kinase/protein kinase B signal transduction"/>
    <property type="evidence" value="ECO:0007669"/>
    <property type="project" value="Ensembl"/>
</dbReference>
<dbReference type="GO" id="GO:0043488">
    <property type="term" value="P:regulation of mRNA stability"/>
    <property type="evidence" value="ECO:0007669"/>
    <property type="project" value="Ensembl"/>
</dbReference>
<dbReference type="GO" id="GO:1904645">
    <property type="term" value="P:response to amyloid-beta"/>
    <property type="evidence" value="ECO:0007669"/>
    <property type="project" value="Ensembl"/>
</dbReference>
<dbReference type="GO" id="GO:0051384">
    <property type="term" value="P:response to glucocorticoid"/>
    <property type="evidence" value="ECO:0007669"/>
    <property type="project" value="Ensembl"/>
</dbReference>
<dbReference type="CDD" id="cd15274">
    <property type="entry name" value="7tmB1_calcitonin_R"/>
    <property type="match status" value="1"/>
</dbReference>
<dbReference type="FunFam" id="1.20.1070.10:FF:000149">
    <property type="entry name" value="Calcitonin receptor"/>
    <property type="match status" value="1"/>
</dbReference>
<dbReference type="FunFam" id="4.10.1240.10:FF:000012">
    <property type="entry name" value="Calcitonin receptor"/>
    <property type="match status" value="1"/>
</dbReference>
<dbReference type="Gene3D" id="4.10.1240.10">
    <property type="entry name" value="GPCR, family 2, extracellular hormone receptor domain"/>
    <property type="match status" value="1"/>
</dbReference>
<dbReference type="Gene3D" id="1.20.1070.10">
    <property type="entry name" value="Rhodopsin 7-helix transmembrane proteins"/>
    <property type="match status" value="1"/>
</dbReference>
<dbReference type="InterPro" id="IPR050332">
    <property type="entry name" value="GPCR_2"/>
</dbReference>
<dbReference type="InterPro" id="IPR017981">
    <property type="entry name" value="GPCR_2-like_7TM"/>
</dbReference>
<dbReference type="InterPro" id="IPR001688">
    <property type="entry name" value="GPCR_2_calcitonin_rcpt"/>
</dbReference>
<dbReference type="InterPro" id="IPR003287">
    <property type="entry name" value="GPCR_2_calcitonin_rcpt_fam"/>
</dbReference>
<dbReference type="InterPro" id="IPR036445">
    <property type="entry name" value="GPCR_2_extracell_dom_sf"/>
</dbReference>
<dbReference type="InterPro" id="IPR001879">
    <property type="entry name" value="GPCR_2_extracellular_dom"/>
</dbReference>
<dbReference type="InterPro" id="IPR000832">
    <property type="entry name" value="GPCR_2_secretin-like"/>
</dbReference>
<dbReference type="InterPro" id="IPR017983">
    <property type="entry name" value="GPCR_2_secretin-like_CS"/>
</dbReference>
<dbReference type="PANTHER" id="PTHR45620:SF8">
    <property type="entry name" value="CALCITONIN RECEPTOR"/>
    <property type="match status" value="1"/>
</dbReference>
<dbReference type="PANTHER" id="PTHR45620">
    <property type="entry name" value="PDF RECEPTOR-LIKE PROTEIN-RELATED"/>
    <property type="match status" value="1"/>
</dbReference>
<dbReference type="Pfam" id="PF00002">
    <property type="entry name" value="7tm_2"/>
    <property type="match status" value="1"/>
</dbReference>
<dbReference type="Pfam" id="PF02793">
    <property type="entry name" value="HRM"/>
    <property type="match status" value="1"/>
</dbReference>
<dbReference type="PRINTS" id="PR00361">
    <property type="entry name" value="CALCITONINR"/>
</dbReference>
<dbReference type="PRINTS" id="PR01350">
    <property type="entry name" value="CTRFAMILY"/>
</dbReference>
<dbReference type="PRINTS" id="PR00249">
    <property type="entry name" value="GPCRSECRETIN"/>
</dbReference>
<dbReference type="SMART" id="SM00008">
    <property type="entry name" value="HormR"/>
    <property type="match status" value="1"/>
</dbReference>
<dbReference type="SUPFAM" id="SSF111418">
    <property type="entry name" value="Hormone receptor domain"/>
    <property type="match status" value="1"/>
</dbReference>
<dbReference type="PROSITE" id="PS00649">
    <property type="entry name" value="G_PROTEIN_RECEP_F2_1"/>
    <property type="match status" value="1"/>
</dbReference>
<dbReference type="PROSITE" id="PS00650">
    <property type="entry name" value="G_PROTEIN_RECEP_F2_2"/>
    <property type="match status" value="1"/>
</dbReference>
<dbReference type="PROSITE" id="PS50227">
    <property type="entry name" value="G_PROTEIN_RECEP_F2_3"/>
    <property type="match status" value="1"/>
</dbReference>
<dbReference type="PROSITE" id="PS50261">
    <property type="entry name" value="G_PROTEIN_RECEP_F2_4"/>
    <property type="match status" value="1"/>
</dbReference>
<gene>
    <name evidence="1" type="primary">CALCR</name>
</gene>
<keyword id="KW-0025">Alternative splicing</keyword>
<keyword id="KW-1003">Cell membrane</keyword>
<keyword id="KW-1015">Disulfide bond</keyword>
<keyword id="KW-0297">G-protein coupled receptor</keyword>
<keyword id="KW-0325">Glycoprotein</keyword>
<keyword id="KW-0472">Membrane</keyword>
<keyword id="KW-0675">Receptor</keyword>
<keyword id="KW-1185">Reference proteome</keyword>
<keyword id="KW-0732">Signal</keyword>
<keyword id="KW-0807">Transducer</keyword>
<keyword id="KW-0812">Transmembrane</keyword>
<keyword id="KW-1133">Transmembrane helix</keyword>
<protein>
    <recommendedName>
        <fullName evidence="1">Calcitonin receptor</fullName>
        <shortName>CT-R</shortName>
    </recommendedName>
</protein>
<accession>P25117</accession>
<organism>
    <name type="scientific">Sus scrofa</name>
    <name type="common">Pig</name>
    <dbReference type="NCBI Taxonomy" id="9823"/>
    <lineage>
        <taxon>Eukaryota</taxon>
        <taxon>Metazoa</taxon>
        <taxon>Chordata</taxon>
        <taxon>Craniata</taxon>
        <taxon>Vertebrata</taxon>
        <taxon>Euteleostomi</taxon>
        <taxon>Mammalia</taxon>
        <taxon>Eutheria</taxon>
        <taxon>Laurasiatheria</taxon>
        <taxon>Artiodactyla</taxon>
        <taxon>Suina</taxon>
        <taxon>Suidae</taxon>
        <taxon>Sus</taxon>
    </lineage>
</organism>
<proteinExistence type="evidence at transcript level"/>
<evidence type="ECO:0000250" key="1">
    <source>
        <dbReference type="UniProtKB" id="P30988"/>
    </source>
</evidence>
<evidence type="ECO:0000255" key="2"/>
<evidence type="ECO:0000303" key="3">
    <source>
    </source>
</evidence>
<evidence type="ECO:0000305" key="4"/>